<dbReference type="EC" id="3.6.4.13" evidence="1"/>
<dbReference type="EMBL" id="AJ720165">
    <property type="protein sequence ID" value="CAG31824.1"/>
    <property type="molecule type" value="mRNA"/>
</dbReference>
<dbReference type="RefSeq" id="NP_001268976.1">
    <property type="nucleotide sequence ID" value="NM_001282047.5"/>
</dbReference>
<dbReference type="RefSeq" id="NP_001384638.1">
    <property type="nucleotide sequence ID" value="NM_001397709.1"/>
</dbReference>
<dbReference type="RefSeq" id="NP_001384639.1">
    <property type="nucleotide sequence ID" value="NM_001397710.1"/>
</dbReference>
<dbReference type="RefSeq" id="XP_015153490.1">
    <property type="nucleotide sequence ID" value="XM_015298004.1"/>
</dbReference>
<dbReference type="RefSeq" id="XP_046759712.1">
    <property type="nucleotide sequence ID" value="XM_046903756.1"/>
</dbReference>
<dbReference type="RefSeq" id="XP_046788311.1">
    <property type="nucleotide sequence ID" value="XM_046932355.1"/>
</dbReference>
<dbReference type="SMR" id="Q5ZKB9"/>
<dbReference type="BioGRID" id="680837">
    <property type="interactions" value="1"/>
</dbReference>
<dbReference type="FunCoup" id="Q5ZKB9">
    <property type="interactions" value="3448"/>
</dbReference>
<dbReference type="STRING" id="9031.ENSGALP00000046305"/>
<dbReference type="PaxDb" id="9031-ENSGALP00000039796"/>
<dbReference type="GeneID" id="419783"/>
<dbReference type="KEGG" id="gga:419783"/>
<dbReference type="CTD" id="1656"/>
<dbReference type="VEuPathDB" id="HostDB:geneid_419783"/>
<dbReference type="eggNOG" id="KOG0326">
    <property type="taxonomic scope" value="Eukaryota"/>
</dbReference>
<dbReference type="InParanoid" id="Q5ZKB9"/>
<dbReference type="OrthoDB" id="10265785at2759"/>
<dbReference type="PhylomeDB" id="Q5ZKB9"/>
<dbReference type="TreeFam" id="TF300440"/>
<dbReference type="Reactome" id="R-GGA-430039">
    <property type="pathway name" value="mRNA decay by 5' to 3' exoribonuclease"/>
</dbReference>
<dbReference type="PRO" id="PR:Q5ZKB9"/>
<dbReference type="Proteomes" id="UP000000539">
    <property type="component" value="Chromosome 24"/>
</dbReference>
<dbReference type="Bgee" id="ENSGALG00000033064">
    <property type="expression patterns" value="Expressed in cerebellum and 12 other cell types or tissues"/>
</dbReference>
<dbReference type="GO" id="GO:0005737">
    <property type="term" value="C:cytoplasm"/>
    <property type="evidence" value="ECO:0000250"/>
    <property type="project" value="UniProtKB"/>
</dbReference>
<dbReference type="GO" id="GO:0010494">
    <property type="term" value="C:cytoplasmic stress granule"/>
    <property type="evidence" value="ECO:0000318"/>
    <property type="project" value="GO_Central"/>
</dbReference>
<dbReference type="GO" id="GO:0005634">
    <property type="term" value="C:nucleus"/>
    <property type="evidence" value="ECO:0000250"/>
    <property type="project" value="UniProtKB"/>
</dbReference>
<dbReference type="GO" id="GO:0000932">
    <property type="term" value="C:P-body"/>
    <property type="evidence" value="ECO:0000250"/>
    <property type="project" value="UniProtKB"/>
</dbReference>
<dbReference type="GO" id="GO:0005524">
    <property type="term" value="F:ATP binding"/>
    <property type="evidence" value="ECO:0007669"/>
    <property type="project" value="UniProtKB-KW"/>
</dbReference>
<dbReference type="GO" id="GO:0016887">
    <property type="term" value="F:ATP hydrolysis activity"/>
    <property type="evidence" value="ECO:0007669"/>
    <property type="project" value="RHEA"/>
</dbReference>
<dbReference type="GO" id="GO:0003729">
    <property type="term" value="F:mRNA binding"/>
    <property type="evidence" value="ECO:0000318"/>
    <property type="project" value="GO_Central"/>
</dbReference>
<dbReference type="GO" id="GO:0003724">
    <property type="term" value="F:RNA helicase activity"/>
    <property type="evidence" value="ECO:0007669"/>
    <property type="project" value="UniProtKB-EC"/>
</dbReference>
<dbReference type="GO" id="GO:0035278">
    <property type="term" value="P:miRNA-mediated gene silencing by inhibition of translation"/>
    <property type="evidence" value="ECO:0000250"/>
    <property type="project" value="UniProtKB"/>
</dbReference>
<dbReference type="GO" id="GO:0017148">
    <property type="term" value="P:negative regulation of translation"/>
    <property type="evidence" value="ECO:0000250"/>
    <property type="project" value="UniProtKB"/>
</dbReference>
<dbReference type="GO" id="GO:0033962">
    <property type="term" value="P:P-body assembly"/>
    <property type="evidence" value="ECO:0000250"/>
    <property type="project" value="UniProtKB"/>
</dbReference>
<dbReference type="GO" id="GO:0034063">
    <property type="term" value="P:stress granule assembly"/>
    <property type="evidence" value="ECO:0000318"/>
    <property type="project" value="GO_Central"/>
</dbReference>
<dbReference type="CDD" id="cd17940">
    <property type="entry name" value="DEADc_DDX6"/>
    <property type="match status" value="1"/>
</dbReference>
<dbReference type="CDD" id="cd18787">
    <property type="entry name" value="SF2_C_DEAD"/>
    <property type="match status" value="1"/>
</dbReference>
<dbReference type="FunFam" id="3.40.50.300:FF:000114">
    <property type="entry name" value="ATP-dependent RNA helicase DDX6"/>
    <property type="match status" value="1"/>
</dbReference>
<dbReference type="FunFam" id="3.40.50.300:FF:000364">
    <property type="entry name" value="ATP-dependent RNA helicase DDX6"/>
    <property type="match status" value="1"/>
</dbReference>
<dbReference type="Gene3D" id="3.40.50.300">
    <property type="entry name" value="P-loop containing nucleotide triphosphate hydrolases"/>
    <property type="match status" value="2"/>
</dbReference>
<dbReference type="InterPro" id="IPR011545">
    <property type="entry name" value="DEAD/DEAH_box_helicase_dom"/>
</dbReference>
<dbReference type="InterPro" id="IPR014001">
    <property type="entry name" value="Helicase_ATP-bd"/>
</dbReference>
<dbReference type="InterPro" id="IPR001650">
    <property type="entry name" value="Helicase_C-like"/>
</dbReference>
<dbReference type="InterPro" id="IPR027417">
    <property type="entry name" value="P-loop_NTPase"/>
</dbReference>
<dbReference type="InterPro" id="IPR000629">
    <property type="entry name" value="RNA-helicase_DEAD-box_CS"/>
</dbReference>
<dbReference type="InterPro" id="IPR014014">
    <property type="entry name" value="RNA_helicase_DEAD_Q_motif"/>
</dbReference>
<dbReference type="PANTHER" id="PTHR47960">
    <property type="entry name" value="DEAD-BOX ATP-DEPENDENT RNA HELICASE 50"/>
    <property type="match status" value="1"/>
</dbReference>
<dbReference type="Pfam" id="PF00270">
    <property type="entry name" value="DEAD"/>
    <property type="match status" value="1"/>
</dbReference>
<dbReference type="Pfam" id="PF00271">
    <property type="entry name" value="Helicase_C"/>
    <property type="match status" value="1"/>
</dbReference>
<dbReference type="SMART" id="SM00487">
    <property type="entry name" value="DEXDc"/>
    <property type="match status" value="1"/>
</dbReference>
<dbReference type="SMART" id="SM00490">
    <property type="entry name" value="HELICc"/>
    <property type="match status" value="1"/>
</dbReference>
<dbReference type="SUPFAM" id="SSF52540">
    <property type="entry name" value="P-loop containing nucleoside triphosphate hydrolases"/>
    <property type="match status" value="1"/>
</dbReference>
<dbReference type="PROSITE" id="PS00039">
    <property type="entry name" value="DEAD_ATP_HELICASE"/>
    <property type="match status" value="1"/>
</dbReference>
<dbReference type="PROSITE" id="PS51192">
    <property type="entry name" value="HELICASE_ATP_BIND_1"/>
    <property type="match status" value="1"/>
</dbReference>
<dbReference type="PROSITE" id="PS51194">
    <property type="entry name" value="HELICASE_CTER"/>
    <property type="match status" value="1"/>
</dbReference>
<dbReference type="PROSITE" id="PS51195">
    <property type="entry name" value="Q_MOTIF"/>
    <property type="match status" value="1"/>
</dbReference>
<proteinExistence type="evidence at transcript level"/>
<keyword id="KW-0067">ATP-binding</keyword>
<keyword id="KW-0963">Cytoplasm</keyword>
<keyword id="KW-0347">Helicase</keyword>
<keyword id="KW-0378">Hydrolase</keyword>
<keyword id="KW-0547">Nucleotide-binding</keyword>
<keyword id="KW-0539">Nucleus</keyword>
<keyword id="KW-1185">Reference proteome</keyword>
<keyword id="KW-0694">RNA-binding</keyword>
<protein>
    <recommendedName>
        <fullName>Probable ATP-dependent RNA helicase DDX6</fullName>
        <ecNumber evidence="1">3.6.4.13</ecNumber>
    </recommendedName>
    <alternativeName>
        <fullName>DEAD box protein 6</fullName>
    </alternativeName>
</protein>
<accession>Q5ZKB9</accession>
<evidence type="ECO:0000250" key="1">
    <source>
        <dbReference type="UniProtKB" id="P26196"/>
    </source>
</evidence>
<evidence type="ECO:0000255" key="2">
    <source>
        <dbReference type="PROSITE-ProRule" id="PRU00541"/>
    </source>
</evidence>
<evidence type="ECO:0000255" key="3">
    <source>
        <dbReference type="PROSITE-ProRule" id="PRU00542"/>
    </source>
</evidence>
<evidence type="ECO:0000256" key="4">
    <source>
        <dbReference type="SAM" id="MobiDB-lite"/>
    </source>
</evidence>
<evidence type="ECO:0000305" key="5"/>
<reference key="1">
    <citation type="journal article" date="2005" name="Genome Biol.">
        <title>Full-length cDNAs from chicken bursal lymphocytes to facilitate gene function analysis.</title>
        <authorList>
            <person name="Caldwell R.B."/>
            <person name="Kierzek A.M."/>
            <person name="Arakawa H."/>
            <person name="Bezzubov Y."/>
            <person name="Zaim J."/>
            <person name="Fiedler P."/>
            <person name="Kutter S."/>
            <person name="Blagodatski A."/>
            <person name="Kostovska D."/>
            <person name="Koter M."/>
            <person name="Plachy J."/>
            <person name="Carninci P."/>
            <person name="Hayashizaki Y."/>
            <person name="Buerstedde J.-M."/>
        </authorList>
    </citation>
    <scope>NUCLEOTIDE SEQUENCE [LARGE SCALE MRNA]</scope>
    <source>
        <strain>CB</strain>
        <tissue>Bursa of Fabricius</tissue>
    </source>
</reference>
<comment type="function">
    <text evidence="1">Essential for the formation of P-bodies, cytosolic membrane-less ribonucleoprotein granules involved in RNA metabolism through the coordinated storage of mRNAs encoding regulatory functions. Plays a role in P-bodies to coordinate the storage of translationally inactive mRNAs in the cytoplasm and prevent their degradation.</text>
</comment>
<comment type="catalytic activity">
    <reaction evidence="1">
        <text>ATP + H2O = ADP + phosphate + H(+)</text>
        <dbReference type="Rhea" id="RHEA:13065"/>
        <dbReference type="ChEBI" id="CHEBI:15377"/>
        <dbReference type="ChEBI" id="CHEBI:15378"/>
        <dbReference type="ChEBI" id="CHEBI:30616"/>
        <dbReference type="ChEBI" id="CHEBI:43474"/>
        <dbReference type="ChEBI" id="CHEBI:456216"/>
        <dbReference type="EC" id="3.6.4.13"/>
    </reaction>
</comment>
<comment type="subcellular location">
    <subcellularLocation>
        <location evidence="1">Cytoplasm</location>
        <location evidence="1">P-body</location>
    </subcellularLocation>
    <subcellularLocation>
        <location evidence="1">Cytoplasm</location>
    </subcellularLocation>
    <subcellularLocation>
        <location evidence="1">Nucleus</location>
    </subcellularLocation>
    <text evidence="1">Upon cellular stress, relocalizes to stress granules.</text>
</comment>
<comment type="similarity">
    <text evidence="5">Belongs to the DEAD box helicase family. DDX6/DHH1 subfamily.</text>
</comment>
<feature type="chain" id="PRO_0000274533" description="Probable ATP-dependent RNA helicase DDX6">
    <location>
        <begin position="1"/>
        <end position="483"/>
    </location>
</feature>
<feature type="domain" description="Helicase ATP-binding" evidence="2">
    <location>
        <begin position="127"/>
        <end position="298"/>
    </location>
</feature>
<feature type="domain" description="Helicase C-terminal" evidence="3">
    <location>
        <begin position="308"/>
        <end position="468"/>
    </location>
</feature>
<feature type="region of interest" description="Disordered" evidence="4">
    <location>
        <begin position="1"/>
        <end position="39"/>
    </location>
</feature>
<feature type="region of interest" description="Disordered" evidence="4">
    <location>
        <begin position="55"/>
        <end position="75"/>
    </location>
</feature>
<feature type="short sequence motif" description="Q motif">
    <location>
        <begin position="96"/>
        <end position="124"/>
    </location>
</feature>
<feature type="short sequence motif" description="DEAD box">
    <location>
        <begin position="246"/>
        <end position="249"/>
    </location>
</feature>
<feature type="compositionally biased region" description="Polar residues" evidence="4">
    <location>
        <begin position="55"/>
        <end position="66"/>
    </location>
</feature>
<feature type="binding site" evidence="2">
    <location>
        <begin position="140"/>
        <end position="147"/>
    </location>
    <ligand>
        <name>ATP</name>
        <dbReference type="ChEBI" id="CHEBI:30616"/>
    </ligand>
</feature>
<gene>
    <name type="primary">DDX6</name>
    <name type="ORF">RCJMB04_11n24</name>
</gene>
<organism>
    <name type="scientific">Gallus gallus</name>
    <name type="common">Chicken</name>
    <dbReference type="NCBI Taxonomy" id="9031"/>
    <lineage>
        <taxon>Eukaryota</taxon>
        <taxon>Metazoa</taxon>
        <taxon>Chordata</taxon>
        <taxon>Craniata</taxon>
        <taxon>Vertebrata</taxon>
        <taxon>Euteleostomi</taxon>
        <taxon>Archelosauria</taxon>
        <taxon>Archosauria</taxon>
        <taxon>Dinosauria</taxon>
        <taxon>Saurischia</taxon>
        <taxon>Theropoda</taxon>
        <taxon>Coelurosauria</taxon>
        <taxon>Aves</taxon>
        <taxon>Neognathae</taxon>
        <taxon>Galloanserae</taxon>
        <taxon>Galliformes</taxon>
        <taxon>Phasianidae</taxon>
        <taxon>Phasianinae</taxon>
        <taxon>Gallus</taxon>
    </lineage>
</organism>
<name>DDX6_CHICK</name>
<sequence length="483" mass="54418">MSTARTENPVIMGLSSQNGQLRGPVKPSGGPGGGGTQTQQQMNQLKNANTINNGTQQQAQSMTTTIKPGDDWKKTLKLPPKDLRIKTSDVTSTKGNEFEDYCLKRELLMGIFEMGWEKPSPIQEESIPIALSGRDILARAKNGTGKSGAYLIPLLERLDLKKDNIQAMVIVPTRELALQVSQICIQVSKHMGGAKVMATTGGTNLRDDIMRLDDTVHVVIATPGRILDLIKKGVAKVEHVQMIVLDEADKLLSQDFVQIMEDIILTLPKNRQILLYSATFPLSVQKFMNSHLQKPYEINLMEELTLKGVTQYYAYVTERQKVHCLNTLFSRLQINQSIIFCNSSQRVELLAKKISQLGYSCFYIHAKMRQEHRNRVFHDFRNGLCRNLVCTDLFTRGIDIQAVNVVINFDFPKLAETYLHRIGRSGRFGHLGLAINLITYDDRFNLKSIEEQLGTEIKPIPSNIDKSLYVAEYHSEPVEDEKQ</sequence>